<evidence type="ECO:0000255" key="1">
    <source>
        <dbReference type="HAMAP-Rule" id="MF_00044"/>
    </source>
</evidence>
<sequence>MRSHSCGDLRSDAIDSTVLLSGWVDRRRDHGGVIFIDLRDRSGTVQITVDPDLGAEAFAVAEHLRNETVLQVEGRVRARPDESRNERLATGEVEVLAQRLKVLNAPSRNLPFAVSVHDDEQVREELRLRHRYLDLRRERMRRNLSLRHQTVQTARRFLEDEGFIEVETPVLTRSTPEGARDYLVPSRVCGGEWFALPQSPQLFKQLLMVGGLERYYQVARCFRDEDLRADRQPEFTQLDMEMSFLDQEQILDLNERLIGRIWKLVKGVELSLPLPRMTWHEAMERYGTDRPDTRYGMELVGVSDIVADMGFKVFSGAVAAGGSVKCITVPGGNDKVSNVRIKPGGDVFSEAQKAGAGGLAFIRVRDGGEIDTIGAIKDNLSDEKKAQLLQRTGAEPGSLILFGAGDTATVNKALDRVRQYLAKELEMVPAEAWNFLWVVDFPMFEFNADENRLEALHHPFCAANPEDLGDDPALWSERLPTARAQAYDLVLNGLELGGGSLRIHDAALQNQVLQTIGLAQEEAQEQFGFLLEALEMGAPPHGGIAFGLDRMVMLLAGEESIRDTIAFPKTQQARCLMTSAPGGASDKQLEELHVASTWVEPEEN</sequence>
<keyword id="KW-0030">Aminoacyl-tRNA synthetase</keyword>
<keyword id="KW-0067">ATP-binding</keyword>
<keyword id="KW-0963">Cytoplasm</keyword>
<keyword id="KW-0436">Ligase</keyword>
<keyword id="KW-0547">Nucleotide-binding</keyword>
<keyword id="KW-0648">Protein biosynthesis</keyword>
<keyword id="KW-1185">Reference proteome</keyword>
<proteinExistence type="inferred from homology"/>
<comment type="function">
    <text evidence="1">Aspartyl-tRNA synthetase with relaxed tRNA specificity since it is able to aspartylate not only its cognate tRNA(Asp) but also tRNA(Asn). Reaction proceeds in two steps: L-aspartate is first activated by ATP to form Asp-AMP and then transferred to the acceptor end of tRNA(Asp/Asn).</text>
</comment>
<comment type="catalytic activity">
    <reaction evidence="1">
        <text>tRNA(Asx) + L-aspartate + ATP = L-aspartyl-tRNA(Asx) + AMP + diphosphate</text>
        <dbReference type="Rhea" id="RHEA:18349"/>
        <dbReference type="Rhea" id="RHEA-COMP:9710"/>
        <dbReference type="Rhea" id="RHEA-COMP:9711"/>
        <dbReference type="ChEBI" id="CHEBI:29991"/>
        <dbReference type="ChEBI" id="CHEBI:30616"/>
        <dbReference type="ChEBI" id="CHEBI:33019"/>
        <dbReference type="ChEBI" id="CHEBI:78442"/>
        <dbReference type="ChEBI" id="CHEBI:78516"/>
        <dbReference type="ChEBI" id="CHEBI:456215"/>
        <dbReference type="EC" id="6.1.1.23"/>
    </reaction>
</comment>
<comment type="subunit">
    <text evidence="1">Homodimer.</text>
</comment>
<comment type="subcellular location">
    <subcellularLocation>
        <location evidence="1">Cytoplasm</location>
    </subcellularLocation>
</comment>
<comment type="similarity">
    <text evidence="1">Belongs to the class-II aminoacyl-tRNA synthetase family. Type 1 subfamily.</text>
</comment>
<organism>
    <name type="scientific">Synechococcus sp. (strain RCC307)</name>
    <dbReference type="NCBI Taxonomy" id="316278"/>
    <lineage>
        <taxon>Bacteria</taxon>
        <taxon>Bacillati</taxon>
        <taxon>Cyanobacteriota</taxon>
        <taxon>Cyanophyceae</taxon>
        <taxon>Synechococcales</taxon>
        <taxon>Synechococcaceae</taxon>
        <taxon>Synechococcus</taxon>
    </lineage>
</organism>
<protein>
    <recommendedName>
        <fullName evidence="1">Aspartate--tRNA(Asp/Asn) ligase</fullName>
        <ecNumber evidence="1">6.1.1.23</ecNumber>
    </recommendedName>
    <alternativeName>
        <fullName evidence="1">Aspartyl-tRNA synthetase</fullName>
        <shortName evidence="1">AspRS</shortName>
    </alternativeName>
    <alternativeName>
        <fullName evidence="1">Non-discriminating aspartyl-tRNA synthetase</fullName>
        <shortName evidence="1">ND-AspRS</shortName>
    </alternativeName>
</protein>
<dbReference type="EC" id="6.1.1.23" evidence="1"/>
<dbReference type="EMBL" id="CT978603">
    <property type="protein sequence ID" value="CAK29341.1"/>
    <property type="molecule type" value="Genomic_DNA"/>
</dbReference>
<dbReference type="SMR" id="A5GWT2"/>
<dbReference type="STRING" id="316278.SynRCC307_2438"/>
<dbReference type="KEGG" id="syr:SynRCC307_2438"/>
<dbReference type="eggNOG" id="COG0173">
    <property type="taxonomic scope" value="Bacteria"/>
</dbReference>
<dbReference type="HOGENOM" id="CLU_014330_3_2_3"/>
<dbReference type="OrthoDB" id="9802326at2"/>
<dbReference type="Proteomes" id="UP000001115">
    <property type="component" value="Chromosome"/>
</dbReference>
<dbReference type="GO" id="GO:0005737">
    <property type="term" value="C:cytoplasm"/>
    <property type="evidence" value="ECO:0007669"/>
    <property type="project" value="UniProtKB-SubCell"/>
</dbReference>
<dbReference type="GO" id="GO:0004815">
    <property type="term" value="F:aspartate-tRNA ligase activity"/>
    <property type="evidence" value="ECO:0007669"/>
    <property type="project" value="UniProtKB-UniRule"/>
</dbReference>
<dbReference type="GO" id="GO:0050560">
    <property type="term" value="F:aspartate-tRNA(Asn) ligase activity"/>
    <property type="evidence" value="ECO:0007669"/>
    <property type="project" value="UniProtKB-EC"/>
</dbReference>
<dbReference type="GO" id="GO:0005524">
    <property type="term" value="F:ATP binding"/>
    <property type="evidence" value="ECO:0007669"/>
    <property type="project" value="UniProtKB-UniRule"/>
</dbReference>
<dbReference type="GO" id="GO:0003676">
    <property type="term" value="F:nucleic acid binding"/>
    <property type="evidence" value="ECO:0007669"/>
    <property type="project" value="InterPro"/>
</dbReference>
<dbReference type="GO" id="GO:0006422">
    <property type="term" value="P:aspartyl-tRNA aminoacylation"/>
    <property type="evidence" value="ECO:0007669"/>
    <property type="project" value="UniProtKB-UniRule"/>
</dbReference>
<dbReference type="CDD" id="cd00777">
    <property type="entry name" value="AspRS_core"/>
    <property type="match status" value="1"/>
</dbReference>
<dbReference type="CDD" id="cd04317">
    <property type="entry name" value="EcAspRS_like_N"/>
    <property type="match status" value="1"/>
</dbReference>
<dbReference type="Gene3D" id="3.30.930.10">
    <property type="entry name" value="Bira Bifunctional Protein, Domain 2"/>
    <property type="match status" value="1"/>
</dbReference>
<dbReference type="Gene3D" id="3.30.1360.30">
    <property type="entry name" value="GAD-like domain"/>
    <property type="match status" value="1"/>
</dbReference>
<dbReference type="Gene3D" id="2.40.50.140">
    <property type="entry name" value="Nucleic acid-binding proteins"/>
    <property type="match status" value="1"/>
</dbReference>
<dbReference type="HAMAP" id="MF_00044">
    <property type="entry name" value="Asp_tRNA_synth_type1"/>
    <property type="match status" value="1"/>
</dbReference>
<dbReference type="InterPro" id="IPR004364">
    <property type="entry name" value="Aa-tRNA-synt_II"/>
</dbReference>
<dbReference type="InterPro" id="IPR006195">
    <property type="entry name" value="aa-tRNA-synth_II"/>
</dbReference>
<dbReference type="InterPro" id="IPR045864">
    <property type="entry name" value="aa-tRNA-synth_II/BPL/LPL"/>
</dbReference>
<dbReference type="InterPro" id="IPR004524">
    <property type="entry name" value="Asp-tRNA-ligase_1"/>
</dbReference>
<dbReference type="InterPro" id="IPR047089">
    <property type="entry name" value="Asp-tRNA-ligase_1_N"/>
</dbReference>
<dbReference type="InterPro" id="IPR002312">
    <property type="entry name" value="Asp/Asn-tRNA-synth_IIb"/>
</dbReference>
<dbReference type="InterPro" id="IPR047090">
    <property type="entry name" value="AspRS_core"/>
</dbReference>
<dbReference type="InterPro" id="IPR004115">
    <property type="entry name" value="GAD-like_sf"/>
</dbReference>
<dbReference type="InterPro" id="IPR029351">
    <property type="entry name" value="GAD_dom"/>
</dbReference>
<dbReference type="InterPro" id="IPR012340">
    <property type="entry name" value="NA-bd_OB-fold"/>
</dbReference>
<dbReference type="InterPro" id="IPR004365">
    <property type="entry name" value="NA-bd_OB_tRNA"/>
</dbReference>
<dbReference type="NCBIfam" id="TIGR00459">
    <property type="entry name" value="aspS_bact"/>
    <property type="match status" value="1"/>
</dbReference>
<dbReference type="NCBIfam" id="NF001750">
    <property type="entry name" value="PRK00476.1"/>
    <property type="match status" value="1"/>
</dbReference>
<dbReference type="PANTHER" id="PTHR22594:SF5">
    <property type="entry name" value="ASPARTATE--TRNA LIGASE, MITOCHONDRIAL"/>
    <property type="match status" value="1"/>
</dbReference>
<dbReference type="PANTHER" id="PTHR22594">
    <property type="entry name" value="ASPARTYL/LYSYL-TRNA SYNTHETASE"/>
    <property type="match status" value="1"/>
</dbReference>
<dbReference type="Pfam" id="PF02938">
    <property type="entry name" value="GAD"/>
    <property type="match status" value="1"/>
</dbReference>
<dbReference type="Pfam" id="PF00152">
    <property type="entry name" value="tRNA-synt_2"/>
    <property type="match status" value="1"/>
</dbReference>
<dbReference type="Pfam" id="PF01336">
    <property type="entry name" value="tRNA_anti-codon"/>
    <property type="match status" value="1"/>
</dbReference>
<dbReference type="PRINTS" id="PR01042">
    <property type="entry name" value="TRNASYNTHASP"/>
</dbReference>
<dbReference type="SUPFAM" id="SSF55681">
    <property type="entry name" value="Class II aaRS and biotin synthetases"/>
    <property type="match status" value="1"/>
</dbReference>
<dbReference type="SUPFAM" id="SSF55261">
    <property type="entry name" value="GAD domain-like"/>
    <property type="match status" value="1"/>
</dbReference>
<dbReference type="SUPFAM" id="SSF50249">
    <property type="entry name" value="Nucleic acid-binding proteins"/>
    <property type="match status" value="1"/>
</dbReference>
<dbReference type="PROSITE" id="PS50862">
    <property type="entry name" value="AA_TRNA_LIGASE_II"/>
    <property type="match status" value="1"/>
</dbReference>
<feature type="chain" id="PRO_1000006775" description="Aspartate--tRNA(Asp/Asn) ligase">
    <location>
        <begin position="1"/>
        <end position="604"/>
    </location>
</feature>
<feature type="region of interest" description="Aspartate" evidence="1">
    <location>
        <begin position="201"/>
        <end position="204"/>
    </location>
</feature>
<feature type="binding site" evidence="1">
    <location>
        <position position="177"/>
    </location>
    <ligand>
        <name>L-aspartate</name>
        <dbReference type="ChEBI" id="CHEBI:29991"/>
    </ligand>
</feature>
<feature type="binding site" evidence="1">
    <location>
        <begin position="223"/>
        <end position="225"/>
    </location>
    <ligand>
        <name>ATP</name>
        <dbReference type="ChEBI" id="CHEBI:30616"/>
    </ligand>
</feature>
<feature type="binding site" evidence="1">
    <location>
        <position position="223"/>
    </location>
    <ligand>
        <name>L-aspartate</name>
        <dbReference type="ChEBI" id="CHEBI:29991"/>
    </ligand>
</feature>
<feature type="binding site" evidence="1">
    <location>
        <position position="232"/>
    </location>
    <ligand>
        <name>ATP</name>
        <dbReference type="ChEBI" id="CHEBI:30616"/>
    </ligand>
</feature>
<feature type="binding site" evidence="1">
    <location>
        <position position="457"/>
    </location>
    <ligand>
        <name>L-aspartate</name>
        <dbReference type="ChEBI" id="CHEBI:29991"/>
    </ligand>
</feature>
<feature type="binding site" evidence="1">
    <location>
        <position position="495"/>
    </location>
    <ligand>
        <name>ATP</name>
        <dbReference type="ChEBI" id="CHEBI:30616"/>
    </ligand>
</feature>
<feature type="binding site" evidence="1">
    <location>
        <position position="502"/>
    </location>
    <ligand>
        <name>L-aspartate</name>
        <dbReference type="ChEBI" id="CHEBI:29991"/>
    </ligand>
</feature>
<feature type="binding site" evidence="1">
    <location>
        <begin position="547"/>
        <end position="550"/>
    </location>
    <ligand>
        <name>ATP</name>
        <dbReference type="ChEBI" id="CHEBI:30616"/>
    </ligand>
</feature>
<feature type="site" description="Important for tRNA non-discrimination" evidence="1">
    <location>
        <position position="30"/>
    </location>
</feature>
<name>SYDND_SYNR3</name>
<gene>
    <name evidence="1" type="primary">aspS</name>
    <name type="ordered locus">SynRCC307_2438</name>
</gene>
<reference key="1">
    <citation type="submission" date="2006-05" db="EMBL/GenBank/DDBJ databases">
        <authorList>
            <consortium name="Genoscope"/>
        </authorList>
    </citation>
    <scope>NUCLEOTIDE SEQUENCE [LARGE SCALE GENOMIC DNA]</scope>
    <source>
        <strain>RCC307</strain>
    </source>
</reference>
<accession>A5GWT2</accession>